<reference key="1">
    <citation type="journal article" date="2013" name="Nature">
        <title>The zebrafish reference genome sequence and its relationship to the human genome.</title>
        <authorList>
            <person name="Howe K."/>
            <person name="Clark M.D."/>
            <person name="Torroja C.F."/>
            <person name="Torrance J."/>
            <person name="Berthelot C."/>
            <person name="Muffato M."/>
            <person name="Collins J.E."/>
            <person name="Humphray S."/>
            <person name="McLaren K."/>
            <person name="Matthews L."/>
            <person name="McLaren S."/>
            <person name="Sealy I."/>
            <person name="Caccamo M."/>
            <person name="Churcher C."/>
            <person name="Scott C."/>
            <person name="Barrett J.C."/>
            <person name="Koch R."/>
            <person name="Rauch G.J."/>
            <person name="White S."/>
            <person name="Chow W."/>
            <person name="Kilian B."/>
            <person name="Quintais L.T."/>
            <person name="Guerra-Assuncao J.A."/>
            <person name="Zhou Y."/>
            <person name="Gu Y."/>
            <person name="Yen J."/>
            <person name="Vogel J.H."/>
            <person name="Eyre T."/>
            <person name="Redmond S."/>
            <person name="Banerjee R."/>
            <person name="Chi J."/>
            <person name="Fu B."/>
            <person name="Langley E."/>
            <person name="Maguire S.F."/>
            <person name="Laird G.K."/>
            <person name="Lloyd D."/>
            <person name="Kenyon E."/>
            <person name="Donaldson S."/>
            <person name="Sehra H."/>
            <person name="Almeida-King J."/>
            <person name="Loveland J."/>
            <person name="Trevanion S."/>
            <person name="Jones M."/>
            <person name="Quail M."/>
            <person name="Willey D."/>
            <person name="Hunt A."/>
            <person name="Burton J."/>
            <person name="Sims S."/>
            <person name="McLay K."/>
            <person name="Plumb B."/>
            <person name="Davis J."/>
            <person name="Clee C."/>
            <person name="Oliver K."/>
            <person name="Clark R."/>
            <person name="Riddle C."/>
            <person name="Elliot D."/>
            <person name="Threadgold G."/>
            <person name="Harden G."/>
            <person name="Ware D."/>
            <person name="Begum S."/>
            <person name="Mortimore B."/>
            <person name="Kerry G."/>
            <person name="Heath P."/>
            <person name="Phillimore B."/>
            <person name="Tracey A."/>
            <person name="Corby N."/>
            <person name="Dunn M."/>
            <person name="Johnson C."/>
            <person name="Wood J."/>
            <person name="Clark S."/>
            <person name="Pelan S."/>
            <person name="Griffiths G."/>
            <person name="Smith M."/>
            <person name="Glithero R."/>
            <person name="Howden P."/>
            <person name="Barker N."/>
            <person name="Lloyd C."/>
            <person name="Stevens C."/>
            <person name="Harley J."/>
            <person name="Holt K."/>
            <person name="Panagiotidis G."/>
            <person name="Lovell J."/>
            <person name="Beasley H."/>
            <person name="Henderson C."/>
            <person name="Gordon D."/>
            <person name="Auger K."/>
            <person name="Wright D."/>
            <person name="Collins J."/>
            <person name="Raisen C."/>
            <person name="Dyer L."/>
            <person name="Leung K."/>
            <person name="Robertson L."/>
            <person name="Ambridge K."/>
            <person name="Leongamornlert D."/>
            <person name="McGuire S."/>
            <person name="Gilderthorp R."/>
            <person name="Griffiths C."/>
            <person name="Manthravadi D."/>
            <person name="Nichol S."/>
            <person name="Barker G."/>
            <person name="Whitehead S."/>
            <person name="Kay M."/>
            <person name="Brown J."/>
            <person name="Murnane C."/>
            <person name="Gray E."/>
            <person name="Humphries M."/>
            <person name="Sycamore N."/>
            <person name="Barker D."/>
            <person name="Saunders D."/>
            <person name="Wallis J."/>
            <person name="Babbage A."/>
            <person name="Hammond S."/>
            <person name="Mashreghi-Mohammadi M."/>
            <person name="Barr L."/>
            <person name="Martin S."/>
            <person name="Wray P."/>
            <person name="Ellington A."/>
            <person name="Matthews N."/>
            <person name="Ellwood M."/>
            <person name="Woodmansey R."/>
            <person name="Clark G."/>
            <person name="Cooper J."/>
            <person name="Tromans A."/>
            <person name="Grafham D."/>
            <person name="Skuce C."/>
            <person name="Pandian R."/>
            <person name="Andrews R."/>
            <person name="Harrison E."/>
            <person name="Kimberley A."/>
            <person name="Garnett J."/>
            <person name="Fosker N."/>
            <person name="Hall R."/>
            <person name="Garner P."/>
            <person name="Kelly D."/>
            <person name="Bird C."/>
            <person name="Palmer S."/>
            <person name="Gehring I."/>
            <person name="Berger A."/>
            <person name="Dooley C.M."/>
            <person name="Ersan-Urun Z."/>
            <person name="Eser C."/>
            <person name="Geiger H."/>
            <person name="Geisler M."/>
            <person name="Karotki L."/>
            <person name="Kirn A."/>
            <person name="Konantz J."/>
            <person name="Konantz M."/>
            <person name="Oberlander M."/>
            <person name="Rudolph-Geiger S."/>
            <person name="Teucke M."/>
            <person name="Lanz C."/>
            <person name="Raddatz G."/>
            <person name="Osoegawa K."/>
            <person name="Zhu B."/>
            <person name="Rapp A."/>
            <person name="Widaa S."/>
            <person name="Langford C."/>
            <person name="Yang F."/>
            <person name="Schuster S.C."/>
            <person name="Carter N.P."/>
            <person name="Harrow J."/>
            <person name="Ning Z."/>
            <person name="Herrero J."/>
            <person name="Searle S.M."/>
            <person name="Enright A."/>
            <person name="Geisler R."/>
            <person name="Plasterk R.H."/>
            <person name="Lee C."/>
            <person name="Westerfield M."/>
            <person name="de Jong P.J."/>
            <person name="Zon L.I."/>
            <person name="Postlethwait J.H."/>
            <person name="Nusslein-Volhard C."/>
            <person name="Hubbard T.J."/>
            <person name="Roest Crollius H."/>
            <person name="Rogers J."/>
            <person name="Stemple D.L."/>
        </authorList>
    </citation>
    <scope>NUCLEOTIDE SEQUENCE [LARGE SCALE GENOMIC DNA]</scope>
    <source>
        <strain>Tuebingen</strain>
    </source>
</reference>
<reference key="2">
    <citation type="journal article" date="2021" name="Biol. Open">
        <title>Tetraspanin18 regulates angiogenesis through VEGFR2 and Notch pathways.</title>
        <authorList>
            <person name="Li G.X."/>
            <person name="Zhang S."/>
            <person name="Liu R."/>
            <person name="Singh B."/>
            <person name="Singh S."/>
            <person name="Quinn D.I."/>
            <person name="Crump G."/>
            <person name="Gill P.S."/>
        </authorList>
    </citation>
    <scope>FUNCTION</scope>
    <scope>DEVELOPMENTAL STAGE</scope>
</reference>
<dbReference type="EMBL" id="BX649600">
    <property type="status" value="NOT_ANNOTATED_CDS"/>
    <property type="molecule type" value="Genomic_DNA"/>
</dbReference>
<dbReference type="RefSeq" id="NP_001002439.2">
    <property type="nucleotide sequence ID" value="NM_001002439.2"/>
</dbReference>
<dbReference type="RefSeq" id="XP_005159229.1">
    <property type="nucleotide sequence ID" value="XM_005159172.3"/>
</dbReference>
<dbReference type="RefSeq" id="XP_005159230.1">
    <property type="nucleotide sequence ID" value="XM_005159173.3"/>
</dbReference>
<dbReference type="RefSeq" id="XP_068070856.1">
    <property type="nucleotide sequence ID" value="XM_068214755.1"/>
</dbReference>
<dbReference type="SMR" id="A0A8M2B5N2"/>
<dbReference type="STRING" id="7955.ENSDARP00000122179"/>
<dbReference type="PaxDb" id="7955-ENSDARP00000122179"/>
<dbReference type="Ensembl" id="ENSDART00000141835">
    <property type="protein sequence ID" value="ENSDARP00000122179"/>
    <property type="gene ID" value="ENSDARG00000015015"/>
</dbReference>
<dbReference type="GeneID" id="436712"/>
<dbReference type="AGR" id="ZFIN:ZDB-GENE-040718-137"/>
<dbReference type="ZFIN" id="ZDB-GENE-040718-137">
    <property type="gene designation" value="tspan18b"/>
</dbReference>
<dbReference type="eggNOG" id="KOG3882">
    <property type="taxonomic scope" value="Eukaryota"/>
</dbReference>
<dbReference type="HOGENOM" id="CLU_055524_4_1_1"/>
<dbReference type="OrthoDB" id="71600at2759"/>
<dbReference type="TreeFam" id="TF352892"/>
<dbReference type="PRO" id="PR:A0A8M2B5N2"/>
<dbReference type="Proteomes" id="UP000000437">
    <property type="component" value="Chromosome 18"/>
</dbReference>
<dbReference type="Bgee" id="ENSDARG00000015015">
    <property type="expression patterns" value="Expressed in spleen and 22 other cell types or tissues"/>
</dbReference>
<dbReference type="GO" id="GO:0005886">
    <property type="term" value="C:plasma membrane"/>
    <property type="evidence" value="ECO:0000318"/>
    <property type="project" value="GO_Central"/>
</dbReference>
<dbReference type="GO" id="GO:0045765">
    <property type="term" value="P:regulation of angiogenesis"/>
    <property type="evidence" value="ECO:0000315"/>
    <property type="project" value="ZFIN"/>
</dbReference>
<dbReference type="GO" id="GO:1903670">
    <property type="term" value="P:regulation of sprouting angiogenesis"/>
    <property type="evidence" value="ECO:0000250"/>
    <property type="project" value="UniProtKB"/>
</dbReference>
<dbReference type="CDD" id="cd03156">
    <property type="entry name" value="uroplakin_I_like_LEL"/>
    <property type="match status" value="1"/>
</dbReference>
<dbReference type="FunFam" id="1.10.1450.10:FF:000012">
    <property type="entry name" value="Tetraspanin"/>
    <property type="match status" value="1"/>
</dbReference>
<dbReference type="Gene3D" id="1.10.1450.10">
    <property type="entry name" value="Tetraspanin"/>
    <property type="match status" value="1"/>
</dbReference>
<dbReference type="InterPro" id="IPR018499">
    <property type="entry name" value="Tetraspanin/Peripherin"/>
</dbReference>
<dbReference type="InterPro" id="IPR000301">
    <property type="entry name" value="Tetraspanin_animals"/>
</dbReference>
<dbReference type="InterPro" id="IPR018503">
    <property type="entry name" value="Tetraspanin_CS"/>
</dbReference>
<dbReference type="InterPro" id="IPR008952">
    <property type="entry name" value="Tetraspanin_EC2_sf"/>
</dbReference>
<dbReference type="PANTHER" id="PTHR19282">
    <property type="entry name" value="TETRASPANIN"/>
    <property type="match status" value="1"/>
</dbReference>
<dbReference type="PANTHER" id="PTHR19282:SF504">
    <property type="entry name" value="TETRASPANIN"/>
    <property type="match status" value="1"/>
</dbReference>
<dbReference type="Pfam" id="PF00335">
    <property type="entry name" value="Tetraspanin"/>
    <property type="match status" value="1"/>
</dbReference>
<dbReference type="PIRSF" id="PIRSF002419">
    <property type="entry name" value="Tetraspanin"/>
    <property type="match status" value="1"/>
</dbReference>
<dbReference type="PRINTS" id="PR00259">
    <property type="entry name" value="TMFOUR"/>
</dbReference>
<dbReference type="SUPFAM" id="SSF48652">
    <property type="entry name" value="Tetraspanin"/>
    <property type="match status" value="1"/>
</dbReference>
<dbReference type="PROSITE" id="PS00212">
    <property type="entry name" value="ALBUMIN_1"/>
    <property type="match status" value="1"/>
</dbReference>
<dbReference type="PROSITE" id="PS00421">
    <property type="entry name" value="TM4_1"/>
    <property type="match status" value="1"/>
</dbReference>
<keyword id="KW-0325">Glycoprotein</keyword>
<keyword id="KW-0472">Membrane</keyword>
<keyword id="KW-1185">Reference proteome</keyword>
<keyword id="KW-0812">Transmembrane</keyword>
<keyword id="KW-1133">Transmembrane helix</keyword>
<comment type="function">
    <text evidence="3">May regulate angiogenesis through KDR/VEGFR2 and NOTCH1 pathways.</text>
</comment>
<comment type="subcellular location">
    <subcellularLocation>
        <location evidence="1">Membrane</location>
        <topology evidence="1">Multi-pass membrane protein</topology>
    </subcellularLocation>
</comment>
<comment type="developmental stage">
    <text evidence="3">First detected at early somitogenesis stage, 12 h post fertilization (hpf), in yolk marginal zone, and then specifically in the dorsal aorta (DA) and in yolk vessels at 24 hpf (PubMed:32694189). At 32 hpf, expression is observed in the DA, posterior cardinal vein (PCV), dorsal longitudinal anastomotic vessels (DLAV) and intersegmental vessel (ISV) (PubMed:32694189). Expression in these vessels is maintained through 32 hpf and then reduced from 32 to 48 hpf (PubMed:32694189). Expression is almost undetectable from 56 hpf to 4 days post fertilization (dpf) (PubMed:32694189).</text>
</comment>
<comment type="similarity">
    <text evidence="4">Belongs to the tetraspanin (TM4SF) family.</text>
</comment>
<sequence>MGLGEASARGTSMEGDCLSCIKYLMFVFNFLIFLGGSFLLGVGVWVVVDPTGFREIVAANPLLFTGVYIILAMGGMLFLLGFLGCCGAIRENKCLLLFFFMLILIIFLAELAAAILAFIFREHLTREYFTKELKKHYQGYNNTDVFTSTWNAIMNTFDCCGVNSPEDFEESIFRIINPSEMVPEACCRRNNHVGESGFSNREECLSGSMLYRNNKGCYSAVVDYFEMYIYVAGALAIVVLTIELFAMVFAMCLFRGIQ</sequence>
<proteinExistence type="evidence at transcript level"/>
<evidence type="ECO:0000255" key="1"/>
<evidence type="ECO:0000255" key="2">
    <source>
        <dbReference type="PROSITE-ProRule" id="PRU00498"/>
    </source>
</evidence>
<evidence type="ECO:0000269" key="3">
    <source>
    </source>
</evidence>
<evidence type="ECO:0000305" key="4"/>
<evidence type="ECO:0000312" key="5">
    <source>
        <dbReference type="ZFIN" id="ZDB-GENE-040718-137"/>
    </source>
</evidence>
<gene>
    <name type="primary">tspan18b</name>
    <name evidence="5" type="ORF">zgc:92637</name>
</gene>
<name>TSN18_DANRE</name>
<organism>
    <name type="scientific">Danio rerio</name>
    <name type="common">Zebrafish</name>
    <name type="synonym">Brachydanio rerio</name>
    <dbReference type="NCBI Taxonomy" id="7955"/>
    <lineage>
        <taxon>Eukaryota</taxon>
        <taxon>Metazoa</taxon>
        <taxon>Chordata</taxon>
        <taxon>Craniata</taxon>
        <taxon>Vertebrata</taxon>
        <taxon>Euteleostomi</taxon>
        <taxon>Actinopterygii</taxon>
        <taxon>Neopterygii</taxon>
        <taxon>Teleostei</taxon>
        <taxon>Ostariophysi</taxon>
        <taxon>Cypriniformes</taxon>
        <taxon>Danionidae</taxon>
        <taxon>Danioninae</taxon>
        <taxon>Danio</taxon>
    </lineage>
</organism>
<accession>A0A8M2B5N2</accession>
<accession>A3KQH0</accession>
<feature type="chain" id="PRO_0000458891" description="Tetraspanin-18B">
    <location>
        <begin position="1"/>
        <end position="258"/>
    </location>
</feature>
<feature type="topological domain" description="Cytoplasmic" evidence="4">
    <location>
        <begin position="1"/>
        <end position="25"/>
    </location>
</feature>
<feature type="transmembrane region" description="Helical" evidence="1">
    <location>
        <begin position="26"/>
        <end position="46"/>
    </location>
</feature>
<feature type="topological domain" description="Extracellular" evidence="4">
    <location>
        <begin position="47"/>
        <end position="61"/>
    </location>
</feature>
<feature type="transmembrane region" description="Helical" evidence="1">
    <location>
        <begin position="62"/>
        <end position="82"/>
    </location>
</feature>
<feature type="topological domain" description="Cytoplasmic" evidence="4">
    <location>
        <begin position="83"/>
        <end position="94"/>
    </location>
</feature>
<feature type="transmembrane region" description="Helical" evidence="1">
    <location>
        <begin position="95"/>
        <end position="115"/>
    </location>
</feature>
<feature type="topological domain" description="Extracellular" evidence="4">
    <location>
        <begin position="116"/>
        <end position="228"/>
    </location>
</feature>
<feature type="transmembrane region" description="Helical" evidence="1">
    <location>
        <begin position="229"/>
        <end position="249"/>
    </location>
</feature>
<feature type="topological domain" description="Cytoplasmic" evidence="4">
    <location>
        <begin position="250"/>
        <end position="258"/>
    </location>
</feature>
<feature type="glycosylation site" description="N-linked (GlcNAc...) asparagine" evidence="2">
    <location>
        <position position="141"/>
    </location>
</feature>
<protein>
    <recommendedName>
        <fullName>Tetraspanin-18B</fullName>
    </recommendedName>
</protein>